<feature type="signal peptide" evidence="2">
    <location>
        <begin position="1"/>
        <end position="22"/>
    </location>
</feature>
<feature type="chain" id="PRO_0000013348" description="Hemocyanin subunit D">
    <location>
        <begin position="23"/>
        <end position="668"/>
    </location>
</feature>
<feature type="binding site" evidence="1">
    <location>
        <position position="206"/>
    </location>
    <ligand>
        <name>Cu cation</name>
        <dbReference type="ChEBI" id="CHEBI:23378"/>
        <label>A</label>
    </ligand>
</feature>
<feature type="binding site" evidence="1">
    <location>
        <position position="210"/>
    </location>
    <ligand>
        <name>Cu cation</name>
        <dbReference type="ChEBI" id="CHEBI:23378"/>
        <label>A</label>
    </ligand>
</feature>
<feature type="binding site" evidence="1">
    <location>
        <position position="236"/>
    </location>
    <ligand>
        <name>Cu cation</name>
        <dbReference type="ChEBI" id="CHEBI:23378"/>
        <label>A</label>
    </ligand>
</feature>
<feature type="binding site" evidence="1">
    <location>
        <position position="357"/>
    </location>
    <ligand>
        <name>Cu cation</name>
        <dbReference type="ChEBI" id="CHEBI:23378"/>
        <label>B</label>
    </ligand>
</feature>
<feature type="binding site" evidence="1">
    <location>
        <position position="361"/>
    </location>
    <ligand>
        <name>Cu cation</name>
        <dbReference type="ChEBI" id="CHEBI:23378"/>
        <label>B</label>
    </ligand>
</feature>
<feature type="binding site" evidence="1">
    <location>
        <position position="397"/>
    </location>
    <ligand>
        <name>Cu cation</name>
        <dbReference type="ChEBI" id="CHEBI:23378"/>
        <label>B</label>
    </ligand>
</feature>
<feature type="glycosylation site" description="N-linked (GlcNAc...) asparagine" evidence="4">
    <location>
        <position position="322"/>
    </location>
</feature>
<feature type="disulfide bond" evidence="1">
    <location>
        <begin position="567"/>
        <end position="614"/>
    </location>
</feature>
<evidence type="ECO:0000250" key="1">
    <source>
        <dbReference type="UniProtKB" id="P10787"/>
    </source>
</evidence>
<evidence type="ECO:0000255" key="2"/>
<evidence type="ECO:0000269" key="3">
    <source>
    </source>
</evidence>
<evidence type="ECO:0000305" key="4"/>
<evidence type="ECO:0000312" key="5">
    <source>
        <dbReference type="EMBL" id="CAC69247.1"/>
    </source>
</evidence>
<gene>
    <name type="primary">HCD</name>
    <name type="synonym">HC2</name>
</gene>
<accession>Q95P07</accession>
<name>HCYD_SCUCO</name>
<sequence>MDTRVLRLTLALVALSGVLADSESCSSAIVNDYKLKQKEIQHLVDTINKPVYPDFKDTRGIIDESKLKGLGTLPRREVFSLFDERNWAEAAKVVELLLEPKTFREFIHLADIIHHRVNEDLFLYALSVAIAHRPDCQGVQVPRVLDIYPDKFLRKEVIHKIKEVSNEGAYLDKVPVIDATEVSDNHLDPNQELLYFLEDLGMNSHHHHWHVIHPAIWLPKHGGVKDRKGELFFYMHKQMVARYDTERLSNDLPRVRPFENWNDPIDEGYSPHLIIDKTGYKYAYRPQGVIVHDLPNLPKTKMFEWKNRIMVGIRKGSLISANKTQVPLNNDHGIDLLGDVVESSLLSVNRVFYGNLHCYAHVIAGKVTDPQSTYGEKNGAMYDVATSARDPLFYSWHKFIDNIFQEHKETLQPYNKDELNFPDVQVDSLRINVANGTYENIVRTYWQNSLFKIAKGFTFTTEGSVLVKVKHLNHETFYYNLEVTNNALEEKHGVVRIFGAVINDERGHPYILNDQRHLVIELDKFTVNLKPGKNSVRQPCYNSAVTAKYDVFYGDVESQKPQEGCNCGWPDYMLLPKGKYEGLRFRVFAIVTNHDEDKVSDQETCLCGDAVAYCGAHNQKYPDKKPMGFPFDRRIDERTFEHFHTPNMIATDVIIKFTGEFLPPKGDI</sequence>
<reference evidence="4" key="1">
    <citation type="journal article" date="2003" name="Eur. J. Biochem.">
        <title>Complete subunit sequences, structure and evolution of the 6 x 6-mer hemocyanin from the common house centipede, Scutigera coleoptrata.</title>
        <authorList>
            <person name="Kusche K."/>
            <person name="Hembach A."/>
            <person name="Hagner-Holler S."/>
            <person name="Gebauer W."/>
            <person name="Burmester T."/>
        </authorList>
    </citation>
    <scope>NUCLEOTIDE SEQUENCE [MRNA]</scope>
    <scope>SUBUNIT</scope>
    <scope>SUBCELLULAR LOCATION</scope>
    <scope>TISSUE SPECIFICITY</scope>
</reference>
<proteinExistence type="evidence at protein level"/>
<protein>
    <recommendedName>
        <fullName>Hemocyanin subunit D</fullName>
    </recommendedName>
</protein>
<keyword id="KW-0186">Copper</keyword>
<keyword id="KW-1015">Disulfide bond</keyword>
<keyword id="KW-0325">Glycoprotein</keyword>
<keyword id="KW-0479">Metal-binding</keyword>
<keyword id="KW-0561">Oxygen transport</keyword>
<keyword id="KW-0964">Secreted</keyword>
<keyword id="KW-0732">Signal</keyword>
<keyword id="KW-0813">Transport</keyword>
<comment type="function">
    <text evidence="4">Hemocyanins are copper-containing oxygen carriers occurring freely dissolved in the hemolymph of many mollusks and arthropods.</text>
</comment>
<comment type="subunit">
    <text evidence="3">36-chain polymer consisting of 6 hexamers, each of which includes 4 different chains, A, B, C and D.</text>
</comment>
<comment type="subcellular location">
    <subcellularLocation>
        <location evidence="3">Secreted</location>
        <location evidence="3">Extracellular space</location>
    </subcellularLocation>
</comment>
<comment type="tissue specificity">
    <text evidence="3">Hemolymph.</text>
</comment>
<comment type="similarity">
    <text evidence="4">Belongs to the tyrosinase family. Hemocyanin subfamily.</text>
</comment>
<organism evidence="5">
    <name type="scientific">Scutigera coleoptrata</name>
    <name type="common">House centipede</name>
    <dbReference type="NCBI Taxonomy" id="29022"/>
    <lineage>
        <taxon>Eukaryota</taxon>
        <taxon>Metazoa</taxon>
        <taxon>Ecdysozoa</taxon>
        <taxon>Arthropoda</taxon>
        <taxon>Myriapoda</taxon>
        <taxon>Chilopoda</taxon>
        <taxon>Notostigmophora</taxon>
        <taxon>Scutigeromorpha</taxon>
        <taxon>Scutigeridae</taxon>
        <taxon>Scutigera</taxon>
    </lineage>
</organism>
<dbReference type="EMBL" id="AJ344360">
    <property type="protein sequence ID" value="CAC69247.1"/>
    <property type="molecule type" value="mRNA"/>
</dbReference>
<dbReference type="SMR" id="Q95P07"/>
<dbReference type="GlyCosmos" id="Q95P07">
    <property type="glycosylation" value="1 site, No reported glycans"/>
</dbReference>
<dbReference type="GO" id="GO:0005576">
    <property type="term" value="C:extracellular region"/>
    <property type="evidence" value="ECO:0000314"/>
    <property type="project" value="UniProtKB"/>
</dbReference>
<dbReference type="GO" id="GO:0046872">
    <property type="term" value="F:metal ion binding"/>
    <property type="evidence" value="ECO:0007669"/>
    <property type="project" value="UniProtKB-KW"/>
</dbReference>
<dbReference type="GO" id="GO:0016491">
    <property type="term" value="F:oxidoreductase activity"/>
    <property type="evidence" value="ECO:0007669"/>
    <property type="project" value="InterPro"/>
</dbReference>
<dbReference type="GO" id="GO:0005344">
    <property type="term" value="F:oxygen carrier activity"/>
    <property type="evidence" value="ECO:0007669"/>
    <property type="project" value="UniProtKB-KW"/>
</dbReference>
<dbReference type="FunFam" id="1.10.1280.10:FF:000004">
    <property type="entry name" value="Hemocyanin subunit 2"/>
    <property type="match status" value="1"/>
</dbReference>
<dbReference type="FunFam" id="2.60.40.1520:FF:000001">
    <property type="entry name" value="Hemocyanin subunit 2"/>
    <property type="match status" value="1"/>
</dbReference>
<dbReference type="Gene3D" id="1.10.1280.10">
    <property type="entry name" value="Di-copper center containing domain from catechol oxidase"/>
    <property type="match status" value="1"/>
</dbReference>
<dbReference type="Gene3D" id="2.60.40.1520">
    <property type="entry name" value="Hemocyanin, C-terminal domain"/>
    <property type="match status" value="1"/>
</dbReference>
<dbReference type="Gene3D" id="1.20.1370.10">
    <property type="entry name" value="Hemocyanin, N-terminal domain"/>
    <property type="match status" value="1"/>
</dbReference>
<dbReference type="InterPro" id="IPR008922">
    <property type="entry name" value="Di-copper_centre_dom_sf"/>
</dbReference>
<dbReference type="InterPro" id="IPR013788">
    <property type="entry name" value="Hemocyanin/hexamerin"/>
</dbReference>
<dbReference type="InterPro" id="IPR000896">
    <property type="entry name" value="Hemocyanin/hexamerin_mid_dom"/>
</dbReference>
<dbReference type="InterPro" id="IPR005203">
    <property type="entry name" value="Hemocyanin_C"/>
</dbReference>
<dbReference type="InterPro" id="IPR037020">
    <property type="entry name" value="Hemocyanin_C_sf"/>
</dbReference>
<dbReference type="InterPro" id="IPR005204">
    <property type="entry name" value="Hemocyanin_N"/>
</dbReference>
<dbReference type="InterPro" id="IPR036697">
    <property type="entry name" value="Hemocyanin_N_sf"/>
</dbReference>
<dbReference type="InterPro" id="IPR014756">
    <property type="entry name" value="Ig_E-set"/>
</dbReference>
<dbReference type="InterPro" id="IPR002227">
    <property type="entry name" value="Tyrosinase_Cu-bd"/>
</dbReference>
<dbReference type="PANTHER" id="PTHR11511">
    <property type="entry name" value="LARVAL STORAGE PROTEIN/PHENOLOXIDASE"/>
    <property type="match status" value="1"/>
</dbReference>
<dbReference type="PANTHER" id="PTHR11511:SF4">
    <property type="entry name" value="PHENOLOXIDASE 2-RELATED"/>
    <property type="match status" value="1"/>
</dbReference>
<dbReference type="Pfam" id="PF03723">
    <property type="entry name" value="Hemocyanin_C"/>
    <property type="match status" value="1"/>
</dbReference>
<dbReference type="Pfam" id="PF00372">
    <property type="entry name" value="Hemocyanin_M"/>
    <property type="match status" value="1"/>
</dbReference>
<dbReference type="Pfam" id="PF03722">
    <property type="entry name" value="Hemocyanin_N"/>
    <property type="match status" value="1"/>
</dbReference>
<dbReference type="PRINTS" id="PR00187">
    <property type="entry name" value="HAEMOCYANIN"/>
</dbReference>
<dbReference type="SUPFAM" id="SSF48056">
    <property type="entry name" value="Di-copper centre-containing domain"/>
    <property type="match status" value="1"/>
</dbReference>
<dbReference type="SUPFAM" id="SSF81296">
    <property type="entry name" value="E set domains"/>
    <property type="match status" value="1"/>
</dbReference>
<dbReference type="SUPFAM" id="SSF48050">
    <property type="entry name" value="Hemocyanin, N-terminal domain"/>
    <property type="match status" value="1"/>
</dbReference>
<dbReference type="PROSITE" id="PS00209">
    <property type="entry name" value="HEMOCYANIN_1"/>
    <property type="match status" value="1"/>
</dbReference>
<dbReference type="PROSITE" id="PS00210">
    <property type="entry name" value="HEMOCYANIN_2"/>
    <property type="match status" value="1"/>
</dbReference>
<dbReference type="PROSITE" id="PS00498">
    <property type="entry name" value="TYROSINASE_2"/>
    <property type="match status" value="1"/>
</dbReference>